<organism>
    <name type="scientific">Mus musculus</name>
    <name type="common">Mouse</name>
    <dbReference type="NCBI Taxonomy" id="10090"/>
    <lineage>
        <taxon>Eukaryota</taxon>
        <taxon>Metazoa</taxon>
        <taxon>Chordata</taxon>
        <taxon>Craniata</taxon>
        <taxon>Vertebrata</taxon>
        <taxon>Euteleostomi</taxon>
        <taxon>Mammalia</taxon>
        <taxon>Eutheria</taxon>
        <taxon>Euarchontoglires</taxon>
        <taxon>Glires</taxon>
        <taxon>Rodentia</taxon>
        <taxon>Myomorpha</taxon>
        <taxon>Muroidea</taxon>
        <taxon>Muridae</taxon>
        <taxon>Murinae</taxon>
        <taxon>Mus</taxon>
        <taxon>Mus</taxon>
    </lineage>
</organism>
<reference key="1">
    <citation type="journal article" date="2004" name="Genome Res.">
        <title>The status, quality, and expansion of the NIH full-length cDNA project: the Mammalian Gene Collection (MGC).</title>
        <authorList>
            <consortium name="The MGC Project Team"/>
        </authorList>
    </citation>
    <scope>NUCLEOTIDE SEQUENCE [LARGE SCALE MRNA]</scope>
    <source>
        <strain>FVB/N</strain>
        <tissue>Colon</tissue>
        <tissue>Salivary gland</tissue>
    </source>
</reference>
<reference key="2">
    <citation type="journal article" date="2004" name="Mol. Cell. Biol.">
        <title>Mice deficient for all PIM kinases display reduced body size and impaired responses to hematopoietic growth factors.</title>
        <authorList>
            <person name="Mikkers H."/>
            <person name="Nawijn M."/>
            <person name="Allen J."/>
            <person name="Brouwers C."/>
            <person name="Verhoeven E."/>
            <person name="Jonkers J."/>
            <person name="Berns A."/>
        </authorList>
    </citation>
    <scope>DISRUPTION PHENOTYPE</scope>
    <scope>FUNCTION</scope>
</reference>
<reference key="3">
    <citation type="journal article" date="2010" name="Islets">
        <title>Pim3 negatively regulates glucose-stimulated insulin secretion.</title>
        <authorList>
            <person name="Vlacich G."/>
            <person name="Nawijn M.C."/>
            <person name="Webb G.C."/>
            <person name="Steiner D.F."/>
        </authorList>
    </citation>
    <scope>TISSUE SPECIFICITY</scope>
    <scope>DISRUPTION PHENOTYPE</scope>
    <scope>INTERACTION WITH SOCS6</scope>
    <scope>INDUCTION</scope>
    <scope>MUTAGENESIS OF LYS-38</scope>
    <scope>FUNCTION</scope>
</reference>
<reference key="4">
    <citation type="journal article" date="2011" name="Proc. Natl. Acad. Sci. U.S.A.">
        <title>The Pim protein kinases regulate energy metabolism and cell growth.</title>
        <authorList>
            <person name="Beharry Z."/>
            <person name="Mahajan S."/>
            <person name="Zemskova M."/>
            <person name="Lin Y.W."/>
            <person name="Tholanikunnel B.G."/>
            <person name="Xia Z."/>
            <person name="Smith C.D."/>
            <person name="Kraft A.S."/>
        </authorList>
    </citation>
    <scope>FUNCTION</scope>
</reference>
<protein>
    <recommendedName>
        <fullName>Serine/threonine-protein kinase pim-3</fullName>
        <ecNumber>2.7.11.1</ecNumber>
    </recommendedName>
</protein>
<comment type="function">
    <text evidence="4 5 6">Proto-oncogene with serine/threonine kinase activity that can prevent apoptosis and promote cell survival and protein translation. May contribute to tumorigenesis through: the delivery of survival signaling through phosphorylation of BAD which induces release of the anti-apoptotic protein Bcl-X(L), the regulation of cell cycle progression and protein synthesis and by regulation of MYC transcriptional activity. Additionally to this role on tumorigenesis, can also negatively regulate insulin secretion by inhibiting the activation of MAPK1/3 (ERK1/2), through SOCS6. Involved also in the control of energy metabolism and regulation of AMPK activity in modulating MYC and PPARGC1A protein levels and cell growth.</text>
</comment>
<comment type="catalytic activity">
    <reaction>
        <text>L-seryl-[protein] + ATP = O-phospho-L-seryl-[protein] + ADP + H(+)</text>
        <dbReference type="Rhea" id="RHEA:17989"/>
        <dbReference type="Rhea" id="RHEA-COMP:9863"/>
        <dbReference type="Rhea" id="RHEA-COMP:11604"/>
        <dbReference type="ChEBI" id="CHEBI:15378"/>
        <dbReference type="ChEBI" id="CHEBI:29999"/>
        <dbReference type="ChEBI" id="CHEBI:30616"/>
        <dbReference type="ChEBI" id="CHEBI:83421"/>
        <dbReference type="ChEBI" id="CHEBI:456216"/>
        <dbReference type="EC" id="2.7.11.1"/>
    </reaction>
</comment>
<comment type="catalytic activity">
    <reaction>
        <text>L-threonyl-[protein] + ATP = O-phospho-L-threonyl-[protein] + ADP + H(+)</text>
        <dbReference type="Rhea" id="RHEA:46608"/>
        <dbReference type="Rhea" id="RHEA-COMP:11060"/>
        <dbReference type="Rhea" id="RHEA-COMP:11605"/>
        <dbReference type="ChEBI" id="CHEBI:15378"/>
        <dbReference type="ChEBI" id="CHEBI:30013"/>
        <dbReference type="ChEBI" id="CHEBI:30616"/>
        <dbReference type="ChEBI" id="CHEBI:61977"/>
        <dbReference type="ChEBI" id="CHEBI:456216"/>
        <dbReference type="EC" id="2.7.11.1"/>
    </reaction>
</comment>
<comment type="subunit">
    <text evidence="1 5">Interacts with BAD (By similarity). Interacts with PPP2CA; this interaction promotes dephosphorylation of PIM3, ubiquitination and proteasomal degradation (By similarity). Interacts with SOCS6.</text>
</comment>
<comment type="subcellular location">
    <subcellularLocation>
        <location evidence="1">Cytoplasm</location>
    </subcellularLocation>
</comment>
<comment type="tissue specificity">
    <text evidence="5">Detected in pancreas but exclusively in beta-cells.</text>
</comment>
<comment type="induction">
    <text evidence="5">By glucose in pancreatic-beta-cells.</text>
</comment>
<comment type="PTM">
    <text evidence="1">Ubiquitinated, leading to proteasomal degradation.</text>
</comment>
<comment type="PTM">
    <text evidence="1">Phosphorylated. Interaction with PPP2CA promotes dephosphorylation (By similarity).</text>
</comment>
<comment type="disruption phenotype">
    <text evidence="4 5">Mice are viable and fertile, with a profound reduction in body size at birth and throughout postnatal life due to a reduction in the number of cells rather than cell size. Deficient mice have also an increased glucose tolerance.</text>
</comment>
<comment type="similarity">
    <text evidence="7">Belongs to the protein kinase superfamily. CAMK Ser/Thr protein kinase family. PIM subfamily.</text>
</comment>
<name>PIM3_MOUSE</name>
<gene>
    <name type="primary">Pim3</name>
</gene>
<evidence type="ECO:0000250" key="1"/>
<evidence type="ECO:0000255" key="2">
    <source>
        <dbReference type="PROSITE-ProRule" id="PRU00159"/>
    </source>
</evidence>
<evidence type="ECO:0000255" key="3">
    <source>
        <dbReference type="PROSITE-ProRule" id="PRU10027"/>
    </source>
</evidence>
<evidence type="ECO:0000269" key="4">
    <source>
    </source>
</evidence>
<evidence type="ECO:0000269" key="5">
    <source>
    </source>
</evidence>
<evidence type="ECO:0000269" key="6">
    <source>
    </source>
</evidence>
<evidence type="ECO:0000305" key="7"/>
<accession>P58750</accession>
<sequence length="326" mass="35970">MLLSKFGSLAHLCGPGGVDHLPVKILQPAKADKESFEKVYQVGAVLGSGGFGTVYAGSRIADGLPVAVKHVVKERVTEWGSLGGVAVPLEVVLLRKVGAAGGARGVIRLLDWFERPDGFLLVLERPEPAQDLFDFITERGALDEPLARRFFAQVLAAVRHCHNCGVVHRDIKDENLLVDLRSGELKLIDFGSGAVLKDTVYTDFDGTRVYSPPEWIRYHRYHGRSATVWSLGVLLYDMVCGDIPFEQDEEILRGRLFFRRRVSPECQQLIEWCLSLRPSERPSLDQIAAHPWMLGTEGSVPENCDLRLCALDTDDGASTTSSSESL</sequence>
<dbReference type="EC" id="2.7.11.1"/>
<dbReference type="EMBL" id="BC017621">
    <property type="protein sequence ID" value="AAH17621.1"/>
    <property type="molecule type" value="mRNA"/>
</dbReference>
<dbReference type="EMBL" id="BC026639">
    <property type="protein sequence ID" value="AAH26639.1"/>
    <property type="molecule type" value="mRNA"/>
</dbReference>
<dbReference type="CCDS" id="CCDS27734.1"/>
<dbReference type="RefSeq" id="NP_663453.1">
    <property type="nucleotide sequence ID" value="NM_145478.2"/>
</dbReference>
<dbReference type="SMR" id="P58750"/>
<dbReference type="BioGRID" id="230194">
    <property type="interactions" value="2"/>
</dbReference>
<dbReference type="FunCoup" id="P58750">
    <property type="interactions" value="779"/>
</dbReference>
<dbReference type="STRING" id="10090.ENSMUSP00000044603"/>
<dbReference type="iPTMnet" id="P58750"/>
<dbReference type="PhosphoSitePlus" id="P58750"/>
<dbReference type="PaxDb" id="10090-ENSMUSP00000044603"/>
<dbReference type="ProteomicsDB" id="288163"/>
<dbReference type="Antibodypedia" id="28269">
    <property type="antibodies" value="148 antibodies from 25 providers"/>
</dbReference>
<dbReference type="DNASU" id="223775"/>
<dbReference type="Ensembl" id="ENSMUST00000042818.11">
    <property type="protein sequence ID" value="ENSMUSP00000044603.10"/>
    <property type="gene ID" value="ENSMUSG00000035828.12"/>
</dbReference>
<dbReference type="GeneID" id="223775"/>
<dbReference type="KEGG" id="mmu:223775"/>
<dbReference type="UCSC" id="uc007xeq.1">
    <property type="organism name" value="mouse"/>
</dbReference>
<dbReference type="AGR" id="MGI:1355297"/>
<dbReference type="CTD" id="415116"/>
<dbReference type="MGI" id="MGI:1355297">
    <property type="gene designation" value="Pim3"/>
</dbReference>
<dbReference type="VEuPathDB" id="HostDB:ENSMUSG00000035828"/>
<dbReference type="eggNOG" id="KOG0583">
    <property type="taxonomic scope" value="Eukaryota"/>
</dbReference>
<dbReference type="GeneTree" id="ENSGT00940000153394"/>
<dbReference type="HOGENOM" id="CLU_000288_63_0_1"/>
<dbReference type="InParanoid" id="P58750"/>
<dbReference type="OMA" id="WGTINGT"/>
<dbReference type="OrthoDB" id="10252171at2759"/>
<dbReference type="PhylomeDB" id="P58750"/>
<dbReference type="TreeFam" id="TF320810"/>
<dbReference type="BioGRID-ORCS" id="223775">
    <property type="hits" value="3 hits in 80 CRISPR screens"/>
</dbReference>
<dbReference type="ChiTaRS" id="Pim3">
    <property type="organism name" value="mouse"/>
</dbReference>
<dbReference type="PRO" id="PR:P58750"/>
<dbReference type="Proteomes" id="UP000000589">
    <property type="component" value="Chromosome 15"/>
</dbReference>
<dbReference type="RNAct" id="P58750">
    <property type="molecule type" value="protein"/>
</dbReference>
<dbReference type="Bgee" id="ENSMUSG00000035828">
    <property type="expression patterns" value="Expressed in paneth cell and 253 other cell types or tissues"/>
</dbReference>
<dbReference type="ExpressionAtlas" id="P58750">
    <property type="expression patterns" value="baseline and differential"/>
</dbReference>
<dbReference type="GO" id="GO:0005829">
    <property type="term" value="C:cytosol"/>
    <property type="evidence" value="ECO:0007669"/>
    <property type="project" value="Ensembl"/>
</dbReference>
<dbReference type="GO" id="GO:0005524">
    <property type="term" value="F:ATP binding"/>
    <property type="evidence" value="ECO:0007669"/>
    <property type="project" value="UniProtKB-KW"/>
</dbReference>
<dbReference type="GO" id="GO:0106310">
    <property type="term" value="F:protein serine kinase activity"/>
    <property type="evidence" value="ECO:0007669"/>
    <property type="project" value="RHEA"/>
</dbReference>
<dbReference type="GO" id="GO:0004674">
    <property type="term" value="F:protein serine/threonine kinase activity"/>
    <property type="evidence" value="ECO:0000250"/>
    <property type="project" value="UniProtKB"/>
</dbReference>
<dbReference type="GO" id="GO:0006915">
    <property type="term" value="P:apoptotic process"/>
    <property type="evidence" value="ECO:0007669"/>
    <property type="project" value="UniProtKB-KW"/>
</dbReference>
<dbReference type="GO" id="GO:0043066">
    <property type="term" value="P:negative regulation of apoptotic process"/>
    <property type="evidence" value="ECO:0000250"/>
    <property type="project" value="UniProtKB"/>
</dbReference>
<dbReference type="GO" id="GO:0061179">
    <property type="term" value="P:negative regulation of insulin secretion involved in cellular response to glucose stimulus"/>
    <property type="evidence" value="ECO:0000315"/>
    <property type="project" value="UniProtKB"/>
</dbReference>
<dbReference type="GO" id="GO:0006468">
    <property type="term" value="P:protein phosphorylation"/>
    <property type="evidence" value="ECO:0000250"/>
    <property type="project" value="UniProtKB"/>
</dbReference>
<dbReference type="GO" id="GO:0007346">
    <property type="term" value="P:regulation of mitotic cell cycle"/>
    <property type="evidence" value="ECO:0000250"/>
    <property type="project" value="UniProtKB"/>
</dbReference>
<dbReference type="FunFam" id="1.10.510.10:FF:000209">
    <property type="entry name" value="Serine/threonine-protein kinase pim-1"/>
    <property type="match status" value="1"/>
</dbReference>
<dbReference type="FunFam" id="3.30.200.20:FF:000232">
    <property type="entry name" value="Serine/threonine-protein kinase pim-1"/>
    <property type="match status" value="1"/>
</dbReference>
<dbReference type="Gene3D" id="3.30.200.20">
    <property type="entry name" value="Phosphorylase Kinase, domain 1"/>
    <property type="match status" value="1"/>
</dbReference>
<dbReference type="Gene3D" id="1.10.510.10">
    <property type="entry name" value="Transferase(Phosphotransferase) domain 1"/>
    <property type="match status" value="1"/>
</dbReference>
<dbReference type="InterPro" id="IPR011009">
    <property type="entry name" value="Kinase-like_dom_sf"/>
</dbReference>
<dbReference type="InterPro" id="IPR017348">
    <property type="entry name" value="PIM1/2/3"/>
</dbReference>
<dbReference type="InterPro" id="IPR051138">
    <property type="entry name" value="PIM_Ser/Thr_kinase"/>
</dbReference>
<dbReference type="InterPro" id="IPR000719">
    <property type="entry name" value="Prot_kinase_dom"/>
</dbReference>
<dbReference type="InterPro" id="IPR017441">
    <property type="entry name" value="Protein_kinase_ATP_BS"/>
</dbReference>
<dbReference type="InterPro" id="IPR008271">
    <property type="entry name" value="Ser/Thr_kinase_AS"/>
</dbReference>
<dbReference type="PANTHER" id="PTHR22984">
    <property type="entry name" value="SERINE/THREONINE-PROTEIN KINASE PIM"/>
    <property type="match status" value="1"/>
</dbReference>
<dbReference type="PANTHER" id="PTHR22984:SF26">
    <property type="entry name" value="SERINE_THREONINE-PROTEIN KINASE PIM-3"/>
    <property type="match status" value="1"/>
</dbReference>
<dbReference type="Pfam" id="PF00069">
    <property type="entry name" value="Pkinase"/>
    <property type="match status" value="1"/>
</dbReference>
<dbReference type="PIRSF" id="PIRSF037993">
    <property type="entry name" value="STPK_Pim-1"/>
    <property type="match status" value="1"/>
</dbReference>
<dbReference type="SMART" id="SM00220">
    <property type="entry name" value="S_TKc"/>
    <property type="match status" value="1"/>
</dbReference>
<dbReference type="SUPFAM" id="SSF56112">
    <property type="entry name" value="Protein kinase-like (PK-like)"/>
    <property type="match status" value="1"/>
</dbReference>
<dbReference type="PROSITE" id="PS00107">
    <property type="entry name" value="PROTEIN_KINASE_ATP"/>
    <property type="match status" value="1"/>
</dbReference>
<dbReference type="PROSITE" id="PS50011">
    <property type="entry name" value="PROTEIN_KINASE_DOM"/>
    <property type="match status" value="1"/>
</dbReference>
<dbReference type="PROSITE" id="PS00108">
    <property type="entry name" value="PROTEIN_KINASE_ST"/>
    <property type="match status" value="1"/>
</dbReference>
<proteinExistence type="evidence at protein level"/>
<feature type="chain" id="PRO_0000086534" description="Serine/threonine-protein kinase pim-3">
    <location>
        <begin position="1"/>
        <end position="326"/>
    </location>
</feature>
<feature type="domain" description="Protein kinase" evidence="2">
    <location>
        <begin position="40"/>
        <end position="293"/>
    </location>
</feature>
<feature type="active site" description="Proton acceptor" evidence="2 3">
    <location>
        <position position="170"/>
    </location>
</feature>
<feature type="binding site" evidence="2">
    <location>
        <begin position="46"/>
        <end position="54"/>
    </location>
    <ligand>
        <name>ATP</name>
        <dbReference type="ChEBI" id="CHEBI:30616"/>
    </ligand>
</feature>
<feature type="binding site" evidence="2">
    <location>
        <position position="69"/>
    </location>
    <ligand>
        <name>ATP</name>
        <dbReference type="ChEBI" id="CHEBI:30616"/>
    </ligand>
</feature>
<feature type="mutagenesis site" description="Enhances insulin secretion after glucose stimulation." evidence="5">
    <original>K</original>
    <variation>R</variation>
    <location>
        <position position="38"/>
    </location>
</feature>
<keyword id="KW-0053">Apoptosis</keyword>
<keyword id="KW-0067">ATP-binding</keyword>
<keyword id="KW-0131">Cell cycle</keyword>
<keyword id="KW-0963">Cytoplasm</keyword>
<keyword id="KW-0418">Kinase</keyword>
<keyword id="KW-0547">Nucleotide-binding</keyword>
<keyword id="KW-0597">Phosphoprotein</keyword>
<keyword id="KW-0656">Proto-oncogene</keyword>
<keyword id="KW-1185">Reference proteome</keyword>
<keyword id="KW-0723">Serine/threonine-protein kinase</keyword>
<keyword id="KW-0808">Transferase</keyword>
<keyword id="KW-0832">Ubl conjugation</keyword>